<name>MUTS_LISMO</name>
<feature type="chain" id="PRO_0000115110" description="DNA mismatch repair protein MutS">
    <location>
        <begin position="1"/>
        <end position="860"/>
    </location>
</feature>
<feature type="binding site" evidence="1">
    <location>
        <begin position="607"/>
        <end position="614"/>
    </location>
    <ligand>
        <name>ATP</name>
        <dbReference type="ChEBI" id="CHEBI:30616"/>
    </ligand>
</feature>
<accession>Q8Y789</accession>
<evidence type="ECO:0000255" key="1">
    <source>
        <dbReference type="HAMAP-Rule" id="MF_00096"/>
    </source>
</evidence>
<sequence length="860" mass="98204">MTEYTPMIKQYLEIKDKYQDAFLFFRLGDFYEMFFEDALNASQILEITLTGREGGTKEKIPMCGVPYHSASGYIDTLIEKGYKVAICEQVEDPKTTKGMVKREVVQLISPGTVMDERGLKAKENNYIASLYCYEGKEYGFAYSDLSTGELKSTVIEASEDRLINELTTLSTRELIVSSSEKEVLSDVMKEQLGLTFSVHEEDTIPAENEKLVTRHMSLSEKRAIGKLLHYLKETQKRDLGHLQQAVHYETSNYMKMDYYSKRNLELAESIRGKGRQGTLLWLLDNTQTAMGGRMLKQWIDRPLIDRKKIIERQNDVSELMAHFFERLELVENLKNVYDLERLAGRVAYGNVNARDLIQLRNSLYQIPRIRATLLSMSSESLTELAEQLDPCEELTEKLEEAIMDSAPISIREGGIIKDGYNSQLDTYRDASRNGKTWIAELERKERELTGIKTLKVGFNRVFGYYIEVTRANTHLLPEGRYERKQTLTNAERYITPELKEKEKLILDAEEKSMELEYQLFSEVREMVKDYIERLQKLAKSVSEIDCLQSFADISEKNHFIRPTLSEDGSLHVKQGRHPVVEKVMGAQSYVANDCDLDENREILLITGPNMSGKSTYMRQVALTAICAQVGCFVPAEEAILPIFDQIFTRIGAADDLIAGQSTFMVEMLEARNAIVHATKDSLILFDEIGRGTATYDGMALAQAIIEYIHENVHAKTLFSTHYHELTDLEKELRGLQNIHVSAVEENGKVVFLHKIKEGPADKSYGIHVAELAELPKSLIERASRILEQLENDDKKIIIASVKQPEEVHEEVQLSMFPLEPEKKASSKETKLLKEIASMNIMQMTPMDAMNKLYELQSKIH</sequence>
<protein>
    <recommendedName>
        <fullName evidence="1">DNA mismatch repair protein MutS</fullName>
    </recommendedName>
</protein>
<organism>
    <name type="scientific">Listeria monocytogenes serovar 1/2a (strain ATCC BAA-679 / EGD-e)</name>
    <dbReference type="NCBI Taxonomy" id="169963"/>
    <lineage>
        <taxon>Bacteria</taxon>
        <taxon>Bacillati</taxon>
        <taxon>Bacillota</taxon>
        <taxon>Bacilli</taxon>
        <taxon>Bacillales</taxon>
        <taxon>Listeriaceae</taxon>
        <taxon>Listeria</taxon>
    </lineage>
</organism>
<proteinExistence type="inferred from homology"/>
<dbReference type="EMBL" id="AL591979">
    <property type="protein sequence ID" value="CAC99481.1"/>
    <property type="molecule type" value="Genomic_DNA"/>
</dbReference>
<dbReference type="PIR" id="AC1250">
    <property type="entry name" value="AC1250"/>
</dbReference>
<dbReference type="RefSeq" id="NP_464928.1">
    <property type="nucleotide sequence ID" value="NC_003210.1"/>
</dbReference>
<dbReference type="RefSeq" id="WP_010990113.1">
    <property type="nucleotide sequence ID" value="NZ_CP149495.1"/>
</dbReference>
<dbReference type="SMR" id="Q8Y789"/>
<dbReference type="STRING" id="169963.gene:17594060"/>
<dbReference type="PaxDb" id="169963-lmo1403"/>
<dbReference type="EnsemblBacteria" id="CAC99481">
    <property type="protein sequence ID" value="CAC99481"/>
    <property type="gene ID" value="CAC99481"/>
</dbReference>
<dbReference type="GeneID" id="985419"/>
<dbReference type="KEGG" id="lmo:lmo1403"/>
<dbReference type="PATRIC" id="fig|169963.11.peg.1442"/>
<dbReference type="eggNOG" id="COG0249">
    <property type="taxonomic scope" value="Bacteria"/>
</dbReference>
<dbReference type="HOGENOM" id="CLU_002472_1_3_9"/>
<dbReference type="OrthoDB" id="9802448at2"/>
<dbReference type="PhylomeDB" id="Q8Y789"/>
<dbReference type="BioCyc" id="LMON169963:LMO1403-MONOMER"/>
<dbReference type="Proteomes" id="UP000000817">
    <property type="component" value="Chromosome"/>
</dbReference>
<dbReference type="GO" id="GO:0005829">
    <property type="term" value="C:cytosol"/>
    <property type="evidence" value="ECO:0000318"/>
    <property type="project" value="GO_Central"/>
</dbReference>
<dbReference type="GO" id="GO:0005524">
    <property type="term" value="F:ATP binding"/>
    <property type="evidence" value="ECO:0007669"/>
    <property type="project" value="UniProtKB-UniRule"/>
</dbReference>
<dbReference type="GO" id="GO:0140664">
    <property type="term" value="F:ATP-dependent DNA damage sensor activity"/>
    <property type="evidence" value="ECO:0007669"/>
    <property type="project" value="InterPro"/>
</dbReference>
<dbReference type="GO" id="GO:0003684">
    <property type="term" value="F:damaged DNA binding"/>
    <property type="evidence" value="ECO:0007669"/>
    <property type="project" value="UniProtKB-UniRule"/>
</dbReference>
<dbReference type="GO" id="GO:0030983">
    <property type="term" value="F:mismatched DNA binding"/>
    <property type="evidence" value="ECO:0000318"/>
    <property type="project" value="GO_Central"/>
</dbReference>
<dbReference type="GO" id="GO:0006298">
    <property type="term" value="P:mismatch repair"/>
    <property type="evidence" value="ECO:0000318"/>
    <property type="project" value="GO_Central"/>
</dbReference>
<dbReference type="CDD" id="cd03284">
    <property type="entry name" value="ABC_MutS1"/>
    <property type="match status" value="1"/>
</dbReference>
<dbReference type="FunFam" id="1.10.1420.10:FF:000007">
    <property type="entry name" value="DNA mismatch repair protein MutS"/>
    <property type="match status" value="1"/>
</dbReference>
<dbReference type="FunFam" id="3.40.1170.10:FF:000001">
    <property type="entry name" value="DNA mismatch repair protein MutS"/>
    <property type="match status" value="1"/>
</dbReference>
<dbReference type="FunFam" id="3.40.50.300:FF:000896">
    <property type="entry name" value="DNA mismatch repair protein MutS"/>
    <property type="match status" value="1"/>
</dbReference>
<dbReference type="Gene3D" id="1.10.1420.10">
    <property type="match status" value="2"/>
</dbReference>
<dbReference type="Gene3D" id="3.40.1170.10">
    <property type="entry name" value="DNA repair protein MutS, domain I"/>
    <property type="match status" value="1"/>
</dbReference>
<dbReference type="Gene3D" id="3.30.420.110">
    <property type="entry name" value="MutS, connector domain"/>
    <property type="match status" value="1"/>
</dbReference>
<dbReference type="Gene3D" id="3.40.50.300">
    <property type="entry name" value="P-loop containing nucleotide triphosphate hydrolases"/>
    <property type="match status" value="1"/>
</dbReference>
<dbReference type="HAMAP" id="MF_00096">
    <property type="entry name" value="MutS"/>
    <property type="match status" value="1"/>
</dbReference>
<dbReference type="InterPro" id="IPR005748">
    <property type="entry name" value="DNA_mismatch_repair_MutS"/>
</dbReference>
<dbReference type="InterPro" id="IPR007695">
    <property type="entry name" value="DNA_mismatch_repair_MutS-lik_N"/>
</dbReference>
<dbReference type="InterPro" id="IPR017261">
    <property type="entry name" value="DNA_mismatch_repair_MutS/MSH"/>
</dbReference>
<dbReference type="InterPro" id="IPR000432">
    <property type="entry name" value="DNA_mismatch_repair_MutS_C"/>
</dbReference>
<dbReference type="InterPro" id="IPR007861">
    <property type="entry name" value="DNA_mismatch_repair_MutS_clamp"/>
</dbReference>
<dbReference type="InterPro" id="IPR007696">
    <property type="entry name" value="DNA_mismatch_repair_MutS_core"/>
</dbReference>
<dbReference type="InterPro" id="IPR016151">
    <property type="entry name" value="DNA_mismatch_repair_MutS_N"/>
</dbReference>
<dbReference type="InterPro" id="IPR036187">
    <property type="entry name" value="DNA_mismatch_repair_MutS_sf"/>
</dbReference>
<dbReference type="InterPro" id="IPR007860">
    <property type="entry name" value="DNA_mmatch_repair_MutS_con_dom"/>
</dbReference>
<dbReference type="InterPro" id="IPR045076">
    <property type="entry name" value="MutS"/>
</dbReference>
<dbReference type="InterPro" id="IPR036678">
    <property type="entry name" value="MutS_con_dom_sf"/>
</dbReference>
<dbReference type="InterPro" id="IPR027417">
    <property type="entry name" value="P-loop_NTPase"/>
</dbReference>
<dbReference type="NCBIfam" id="TIGR01070">
    <property type="entry name" value="mutS1"/>
    <property type="match status" value="1"/>
</dbReference>
<dbReference type="NCBIfam" id="NF003810">
    <property type="entry name" value="PRK05399.1"/>
    <property type="match status" value="1"/>
</dbReference>
<dbReference type="PANTHER" id="PTHR11361:SF34">
    <property type="entry name" value="DNA MISMATCH REPAIR PROTEIN MSH1, MITOCHONDRIAL"/>
    <property type="match status" value="1"/>
</dbReference>
<dbReference type="PANTHER" id="PTHR11361">
    <property type="entry name" value="DNA MISMATCH REPAIR PROTEIN MUTS FAMILY MEMBER"/>
    <property type="match status" value="1"/>
</dbReference>
<dbReference type="Pfam" id="PF01624">
    <property type="entry name" value="MutS_I"/>
    <property type="match status" value="1"/>
</dbReference>
<dbReference type="Pfam" id="PF05188">
    <property type="entry name" value="MutS_II"/>
    <property type="match status" value="1"/>
</dbReference>
<dbReference type="Pfam" id="PF05192">
    <property type="entry name" value="MutS_III"/>
    <property type="match status" value="1"/>
</dbReference>
<dbReference type="Pfam" id="PF05190">
    <property type="entry name" value="MutS_IV"/>
    <property type="match status" value="1"/>
</dbReference>
<dbReference type="Pfam" id="PF00488">
    <property type="entry name" value="MutS_V"/>
    <property type="match status" value="1"/>
</dbReference>
<dbReference type="PIRSF" id="PIRSF037677">
    <property type="entry name" value="DNA_mis_repair_Msh6"/>
    <property type="match status" value="1"/>
</dbReference>
<dbReference type="SMART" id="SM00534">
    <property type="entry name" value="MUTSac"/>
    <property type="match status" value="1"/>
</dbReference>
<dbReference type="SMART" id="SM00533">
    <property type="entry name" value="MUTSd"/>
    <property type="match status" value="1"/>
</dbReference>
<dbReference type="SUPFAM" id="SSF55271">
    <property type="entry name" value="DNA repair protein MutS, domain I"/>
    <property type="match status" value="1"/>
</dbReference>
<dbReference type="SUPFAM" id="SSF53150">
    <property type="entry name" value="DNA repair protein MutS, domain II"/>
    <property type="match status" value="1"/>
</dbReference>
<dbReference type="SUPFAM" id="SSF48334">
    <property type="entry name" value="DNA repair protein MutS, domain III"/>
    <property type="match status" value="1"/>
</dbReference>
<dbReference type="SUPFAM" id="SSF52540">
    <property type="entry name" value="P-loop containing nucleoside triphosphate hydrolases"/>
    <property type="match status" value="1"/>
</dbReference>
<dbReference type="PROSITE" id="PS00486">
    <property type="entry name" value="DNA_MISMATCH_REPAIR_2"/>
    <property type="match status" value="1"/>
</dbReference>
<reference key="1">
    <citation type="journal article" date="2001" name="Science">
        <title>Comparative genomics of Listeria species.</title>
        <authorList>
            <person name="Glaser P."/>
            <person name="Frangeul L."/>
            <person name="Buchrieser C."/>
            <person name="Rusniok C."/>
            <person name="Amend A."/>
            <person name="Baquero F."/>
            <person name="Berche P."/>
            <person name="Bloecker H."/>
            <person name="Brandt P."/>
            <person name="Chakraborty T."/>
            <person name="Charbit A."/>
            <person name="Chetouani F."/>
            <person name="Couve E."/>
            <person name="de Daruvar A."/>
            <person name="Dehoux P."/>
            <person name="Domann E."/>
            <person name="Dominguez-Bernal G."/>
            <person name="Duchaud E."/>
            <person name="Durant L."/>
            <person name="Dussurget O."/>
            <person name="Entian K.-D."/>
            <person name="Fsihi H."/>
            <person name="Garcia-del Portillo F."/>
            <person name="Garrido P."/>
            <person name="Gautier L."/>
            <person name="Goebel W."/>
            <person name="Gomez-Lopez N."/>
            <person name="Hain T."/>
            <person name="Hauf J."/>
            <person name="Jackson D."/>
            <person name="Jones L.-M."/>
            <person name="Kaerst U."/>
            <person name="Kreft J."/>
            <person name="Kuhn M."/>
            <person name="Kunst F."/>
            <person name="Kurapkat G."/>
            <person name="Madueno E."/>
            <person name="Maitournam A."/>
            <person name="Mata Vicente J."/>
            <person name="Ng E."/>
            <person name="Nedjari H."/>
            <person name="Nordsiek G."/>
            <person name="Novella S."/>
            <person name="de Pablos B."/>
            <person name="Perez-Diaz J.-C."/>
            <person name="Purcell R."/>
            <person name="Remmel B."/>
            <person name="Rose M."/>
            <person name="Schlueter T."/>
            <person name="Simoes N."/>
            <person name="Tierrez A."/>
            <person name="Vazquez-Boland J.-A."/>
            <person name="Voss H."/>
            <person name="Wehland J."/>
            <person name="Cossart P."/>
        </authorList>
    </citation>
    <scope>NUCLEOTIDE SEQUENCE [LARGE SCALE GENOMIC DNA]</scope>
    <source>
        <strain>ATCC BAA-679 / EGD-e</strain>
    </source>
</reference>
<keyword id="KW-0067">ATP-binding</keyword>
<keyword id="KW-0227">DNA damage</keyword>
<keyword id="KW-0234">DNA repair</keyword>
<keyword id="KW-0238">DNA-binding</keyword>
<keyword id="KW-0547">Nucleotide-binding</keyword>
<keyword id="KW-1185">Reference proteome</keyword>
<comment type="function">
    <text evidence="1">This protein is involved in the repair of mismatches in DNA. It is possible that it carries out the mismatch recognition step. This protein has a weak ATPase activity.</text>
</comment>
<comment type="similarity">
    <text evidence="1">Belongs to the DNA mismatch repair MutS family.</text>
</comment>
<gene>
    <name evidence="1" type="primary">mutS</name>
    <name type="ordered locus">lmo1403</name>
</gene>